<gene>
    <name type="primary">Ctps2</name>
</gene>
<sequence length="586" mass="65514">MKYILVTGGVISGIGKGIIASSIGTILKSCGLRVTAIKIDPYINIDAGTFSPYEHGEVFVLNDGGEVDLDLGNYERFLDINLYKDNNITTGKIYQHVINKERRGDYLGKTVQVVPHITDAIQEWVMNQAKVSVDGNKEDPQICVIELGGTIGDIEGMAFVEAFRQFQFKAKKENFYNIHVSLVPQPSATGEQKTKPTQNSVRALRGLGLSPDLIVCRSSTPIEMAVKEKISMFCHVNPEQVICIHDVSSIYRVPLLLEEQGVVKYFQERLGLPINDCSSNLLFKWKAMADRYERLQKICSIALVGKYTKLRDCYASVFKALEHSALAINHKLNLMYIDSIDLEPVTKAEDPVKFHEAWQKLCLADGILVPGGFGIRGTLGKLQAISWARTKKIPFLGICLGMQLAVIEFARNCLNLKDANSTEFEPNTPVPLVIDMPEHNPGDLGGTMRLGLRRTVFTTENSILKKLYGDVPYIEERHRHRYEVNPNLINQFENKDLCFVGEDVDGKRMEIVELTSHPYFIGVQFHPEFSSRPMKPSPPYLGLLLAATGNLNAHLQQMNKLPYSDGYSDASDDSFPEAKLAELDLN</sequence>
<keyword id="KW-0002">3D-structure</keyword>
<keyword id="KW-0025">Alternative splicing</keyword>
<keyword id="KW-0067">ATP-binding</keyword>
<keyword id="KW-0315">Glutamine amidotransferase</keyword>
<keyword id="KW-0436">Ligase</keyword>
<keyword id="KW-0547">Nucleotide-binding</keyword>
<keyword id="KW-0597">Phosphoprotein</keyword>
<keyword id="KW-0665">Pyrimidine biosynthesis</keyword>
<keyword id="KW-1185">Reference proteome</keyword>
<comment type="function">
    <text evidence="1">Catalyzes the ATP-dependent amination of UTP to CTP with either L-glutamine or ammonia as the source of nitrogen. Constitutes the rate-limiting enzyme in the synthesis of cytosine nucleotides (By similarity).</text>
</comment>
<comment type="catalytic activity">
    <reaction>
        <text>UTP + L-glutamine + ATP + H2O = CTP + L-glutamate + ADP + phosphate + 2 H(+)</text>
        <dbReference type="Rhea" id="RHEA:26426"/>
        <dbReference type="ChEBI" id="CHEBI:15377"/>
        <dbReference type="ChEBI" id="CHEBI:15378"/>
        <dbReference type="ChEBI" id="CHEBI:29985"/>
        <dbReference type="ChEBI" id="CHEBI:30616"/>
        <dbReference type="ChEBI" id="CHEBI:37563"/>
        <dbReference type="ChEBI" id="CHEBI:43474"/>
        <dbReference type="ChEBI" id="CHEBI:46398"/>
        <dbReference type="ChEBI" id="CHEBI:58359"/>
        <dbReference type="ChEBI" id="CHEBI:456216"/>
        <dbReference type="EC" id="6.3.4.2"/>
    </reaction>
</comment>
<comment type="pathway">
    <text>Pyrimidine metabolism; CTP biosynthesis via de novo pathway; CTP from UDP: step 2/2.</text>
</comment>
<comment type="alternative products">
    <event type="alternative splicing"/>
    <isoform>
        <id>P70303-1</id>
        <name>1</name>
        <sequence type="displayed"/>
    </isoform>
    <isoform>
        <id>P70303-2</id>
        <name>2</name>
        <sequence type="described" ref="VSP_019894"/>
    </isoform>
    <isoform>
        <id>P70303-3</id>
        <name>3</name>
        <sequence type="described" ref="VSP_019893 VSP_019895 VSP_019896"/>
    </isoform>
</comment>
<comment type="similarity">
    <text evidence="4">Belongs to the CTP synthase family.</text>
</comment>
<organism>
    <name type="scientific">Mus musculus</name>
    <name type="common">Mouse</name>
    <dbReference type="NCBI Taxonomy" id="10090"/>
    <lineage>
        <taxon>Eukaryota</taxon>
        <taxon>Metazoa</taxon>
        <taxon>Chordata</taxon>
        <taxon>Craniata</taxon>
        <taxon>Vertebrata</taxon>
        <taxon>Euteleostomi</taxon>
        <taxon>Mammalia</taxon>
        <taxon>Eutheria</taxon>
        <taxon>Euarchontoglires</taxon>
        <taxon>Glires</taxon>
        <taxon>Rodentia</taxon>
        <taxon>Myomorpha</taxon>
        <taxon>Muroidea</taxon>
        <taxon>Muridae</taxon>
        <taxon>Murinae</taxon>
        <taxon>Mus</taxon>
        <taxon>Mus</taxon>
    </lineage>
</organism>
<proteinExistence type="evidence at protein level"/>
<accession>P70303</accession>
<accession>Q3TPQ2</accession>
<accession>Q3TT59</accession>
<evidence type="ECO:0000250" key="1"/>
<evidence type="ECO:0000255" key="2">
    <source>
        <dbReference type="PROSITE-ProRule" id="PRU00605"/>
    </source>
</evidence>
<evidence type="ECO:0000303" key="3">
    <source>
    </source>
</evidence>
<evidence type="ECO:0000305" key="4"/>
<evidence type="ECO:0007744" key="5">
    <source>
    </source>
</evidence>
<evidence type="ECO:0007829" key="6">
    <source>
        <dbReference type="PDB" id="7MIU"/>
    </source>
</evidence>
<protein>
    <recommendedName>
        <fullName>CTP synthase 2</fullName>
        <ecNumber>6.3.4.2</ecNumber>
    </recommendedName>
    <alternativeName>
        <fullName>CTP synthetase 2</fullName>
        <shortName>CTPsH</shortName>
    </alternativeName>
    <alternativeName>
        <fullName>UTP--ammonia ligase 2</fullName>
    </alternativeName>
</protein>
<feature type="chain" id="PRO_0000247034" description="CTP synthase 2">
    <location>
        <begin position="1"/>
        <end position="586"/>
    </location>
</feature>
<feature type="domain" description="Glutamine amidotransferase type-1" evidence="2">
    <location>
        <begin position="300"/>
        <end position="554"/>
    </location>
</feature>
<feature type="active site" description="For GATase activity" evidence="2">
    <location>
        <position position="399"/>
    </location>
</feature>
<feature type="active site" description="For GATase activity" evidence="2">
    <location>
        <position position="526"/>
    </location>
</feature>
<feature type="active site" description="For GATase activity" evidence="2">
    <location>
        <position position="528"/>
    </location>
</feature>
<feature type="modified residue" description="Phosphoserine" evidence="5">
    <location>
        <position position="568"/>
    </location>
</feature>
<feature type="modified residue" description="Phosphoserine" evidence="5">
    <location>
        <position position="571"/>
    </location>
</feature>
<feature type="modified residue" description="Phosphoserine" evidence="5">
    <location>
        <position position="574"/>
    </location>
</feature>
<feature type="splice variant" id="VSP_019893" description="In isoform 3." evidence="3">
    <original>M</original>
    <variation>MGSELLGKNSALFSSFPTFCGGGPLGCTVADGQTFMIASGYWQSPIRPPM</variation>
    <location>
        <position position="1"/>
    </location>
</feature>
<feature type="splice variant" id="VSP_019894" description="In isoform 2." evidence="3">
    <location>
        <begin position="465"/>
        <end position="515"/>
    </location>
</feature>
<feature type="splice variant" id="VSP_019895" description="In isoform 3." evidence="3">
    <original>KKLYGDVP</original>
    <variation>SLYLQCSG</variation>
    <location>
        <begin position="465"/>
        <end position="472"/>
    </location>
</feature>
<feature type="splice variant" id="VSP_019896" description="In isoform 3." evidence="3">
    <location>
        <begin position="473"/>
        <end position="586"/>
    </location>
</feature>
<feature type="strand" evidence="6">
    <location>
        <begin position="2"/>
        <end position="8"/>
    </location>
</feature>
<feature type="turn" evidence="6">
    <location>
        <begin position="12"/>
        <end position="15"/>
    </location>
</feature>
<feature type="helix" evidence="6">
    <location>
        <begin position="16"/>
        <end position="29"/>
    </location>
</feature>
<feature type="strand" evidence="6">
    <location>
        <begin position="34"/>
        <end position="40"/>
    </location>
</feature>
<feature type="helix" evidence="6">
    <location>
        <begin position="47"/>
        <end position="49"/>
    </location>
</feature>
<feature type="helix" evidence="6">
    <location>
        <begin position="52"/>
        <end position="55"/>
    </location>
</feature>
<feature type="helix" evidence="6">
    <location>
        <begin position="69"/>
        <end position="77"/>
    </location>
</feature>
<feature type="helix" evidence="6">
    <location>
        <begin position="84"/>
        <end position="86"/>
    </location>
</feature>
<feature type="strand" evidence="6">
    <location>
        <begin position="87"/>
        <end position="89"/>
    </location>
</feature>
<feature type="helix" evidence="6">
    <location>
        <begin position="90"/>
        <end position="103"/>
    </location>
</feature>
<feature type="turn" evidence="6">
    <location>
        <begin position="104"/>
        <end position="108"/>
    </location>
</feature>
<feature type="helix" evidence="6">
    <location>
        <begin position="113"/>
        <end position="129"/>
    </location>
</feature>
<feature type="strand" evidence="6">
    <location>
        <begin position="134"/>
        <end position="138"/>
    </location>
</feature>
<feature type="strand" evidence="6">
    <location>
        <begin position="141"/>
        <end position="147"/>
    </location>
</feature>
<feature type="helix" evidence="6">
    <location>
        <begin position="154"/>
        <end position="156"/>
    </location>
</feature>
<feature type="helix" evidence="6">
    <location>
        <begin position="157"/>
        <end position="166"/>
    </location>
</feature>
<feature type="turn" evidence="6">
    <location>
        <begin position="167"/>
        <end position="169"/>
    </location>
</feature>
<feature type="turn" evidence="6">
    <location>
        <begin position="172"/>
        <end position="174"/>
    </location>
</feature>
<feature type="strand" evidence="6">
    <location>
        <begin position="175"/>
        <end position="182"/>
    </location>
</feature>
<feature type="helix" evidence="6">
    <location>
        <begin position="195"/>
        <end position="206"/>
    </location>
</feature>
<feature type="strand" evidence="6">
    <location>
        <begin position="212"/>
        <end position="217"/>
    </location>
</feature>
<feature type="helix" evidence="6">
    <location>
        <begin position="224"/>
        <end position="234"/>
    </location>
</feature>
<feature type="turn" evidence="6">
    <location>
        <begin position="238"/>
        <end position="240"/>
    </location>
</feature>
<feature type="strand" evidence="6">
    <location>
        <begin position="241"/>
        <end position="244"/>
    </location>
</feature>
<feature type="helix" evidence="6">
    <location>
        <begin position="250"/>
        <end position="252"/>
    </location>
</feature>
<feature type="helix" evidence="6">
    <location>
        <begin position="253"/>
        <end position="259"/>
    </location>
</feature>
<feature type="helix" evidence="6">
    <location>
        <begin position="262"/>
        <end position="270"/>
    </location>
</feature>
<feature type="helix" evidence="6">
    <location>
        <begin position="283"/>
        <end position="293"/>
    </location>
</feature>
<feature type="strand" evidence="6">
    <location>
        <begin position="297"/>
        <end position="304"/>
    </location>
</feature>
<feature type="turn" evidence="6">
    <location>
        <begin position="306"/>
        <end position="309"/>
    </location>
</feature>
<feature type="helix" evidence="6">
    <location>
        <begin position="311"/>
        <end position="314"/>
    </location>
</feature>
<feature type="helix" evidence="6">
    <location>
        <begin position="315"/>
        <end position="327"/>
    </location>
</feature>
<feature type="strand" evidence="6">
    <location>
        <begin position="330"/>
        <end position="337"/>
    </location>
</feature>
<feature type="helix" evidence="6">
    <location>
        <begin position="339"/>
        <end position="342"/>
    </location>
</feature>
<feature type="helix" evidence="6">
    <location>
        <begin position="344"/>
        <end position="349"/>
    </location>
</feature>
<feature type="helix" evidence="6">
    <location>
        <begin position="351"/>
        <end position="362"/>
    </location>
</feature>
<feature type="strand" evidence="6">
    <location>
        <begin position="365"/>
        <end position="369"/>
    </location>
</feature>
<feature type="strand" evidence="6">
    <location>
        <begin position="373"/>
        <end position="375"/>
    </location>
</feature>
<feature type="helix" evidence="6">
    <location>
        <begin position="378"/>
        <end position="390"/>
    </location>
</feature>
<feature type="strand" evidence="6">
    <location>
        <begin position="395"/>
        <end position="398"/>
    </location>
</feature>
<feature type="helix" evidence="6">
    <location>
        <begin position="400"/>
        <end position="413"/>
    </location>
</feature>
<feature type="strand" evidence="6">
    <location>
        <begin position="419"/>
        <end position="421"/>
    </location>
</feature>
<feature type="turn" evidence="6">
    <location>
        <begin position="422"/>
        <end position="424"/>
    </location>
</feature>
<feature type="strand" evidence="6">
    <location>
        <begin position="429"/>
        <end position="435"/>
    </location>
</feature>
<feature type="strand" evidence="6">
    <location>
        <begin position="449"/>
        <end position="457"/>
    </location>
</feature>
<feature type="helix" evidence="6">
    <location>
        <begin position="463"/>
        <end position="467"/>
    </location>
</feature>
<feature type="strand" evidence="6">
    <location>
        <begin position="472"/>
        <end position="484"/>
    </location>
</feature>
<feature type="helix" evidence="6">
    <location>
        <begin position="488"/>
        <end position="491"/>
    </location>
</feature>
<feature type="turn" evidence="6">
    <location>
        <begin position="492"/>
        <end position="494"/>
    </location>
</feature>
<feature type="strand" evidence="6">
    <location>
        <begin position="495"/>
        <end position="503"/>
    </location>
</feature>
<feature type="strand" evidence="6">
    <location>
        <begin position="506"/>
        <end position="514"/>
    </location>
</feature>
<feature type="strand" evidence="6">
    <location>
        <begin position="517"/>
        <end position="525"/>
    </location>
</feature>
<feature type="helix" evidence="6">
    <location>
        <begin position="527"/>
        <end position="530"/>
    </location>
</feature>
<feature type="helix" evidence="6">
    <location>
        <begin position="538"/>
        <end position="547"/>
    </location>
</feature>
<feature type="turn" evidence="6">
    <location>
        <begin position="548"/>
        <end position="550"/>
    </location>
</feature>
<feature type="helix" evidence="6">
    <location>
        <begin position="551"/>
        <end position="556"/>
    </location>
</feature>
<name>PYRG2_MOUSE</name>
<dbReference type="EC" id="6.3.4.2"/>
<dbReference type="EMBL" id="U49385">
    <property type="protein sequence ID" value="AAB17729.1"/>
    <property type="molecule type" value="mRNA"/>
</dbReference>
<dbReference type="EMBL" id="AK032018">
    <property type="protein sequence ID" value="BAC27651.1"/>
    <property type="molecule type" value="mRNA"/>
</dbReference>
<dbReference type="EMBL" id="AK052854">
    <property type="protein sequence ID" value="BAC35174.1"/>
    <property type="molecule type" value="mRNA"/>
</dbReference>
<dbReference type="EMBL" id="AK084595">
    <property type="protein sequence ID" value="BAC39223.1"/>
    <property type="molecule type" value="mRNA"/>
</dbReference>
<dbReference type="EMBL" id="AK150966">
    <property type="protein sequence ID" value="BAE29997.1"/>
    <property type="molecule type" value="mRNA"/>
</dbReference>
<dbReference type="EMBL" id="AK151597">
    <property type="protein sequence ID" value="BAE30537.1"/>
    <property type="molecule type" value="mRNA"/>
</dbReference>
<dbReference type="EMBL" id="AK161564">
    <property type="protein sequence ID" value="BAE36466.1"/>
    <property type="molecule type" value="mRNA"/>
</dbReference>
<dbReference type="EMBL" id="AK164206">
    <property type="protein sequence ID" value="BAE37683.1"/>
    <property type="molecule type" value="mRNA"/>
</dbReference>
<dbReference type="EMBL" id="BC003257">
    <property type="protein sequence ID" value="AAH03257.1"/>
    <property type="molecule type" value="mRNA"/>
</dbReference>
<dbReference type="CCDS" id="CCDS41202.1">
    <molecule id="P70303-1"/>
</dbReference>
<dbReference type="CCDS" id="CCDS53240.1">
    <molecule id="P70303-2"/>
</dbReference>
<dbReference type="RefSeq" id="NP_001162040.1">
    <molecule id="P70303-1"/>
    <property type="nucleotide sequence ID" value="NM_001168568.1"/>
</dbReference>
<dbReference type="RefSeq" id="NP_001162041.1">
    <molecule id="P70303-1"/>
    <property type="nucleotide sequence ID" value="NM_001168569.1"/>
</dbReference>
<dbReference type="RefSeq" id="NP_001162043.1">
    <molecule id="P70303-2"/>
    <property type="nucleotide sequence ID" value="NM_001168571.1"/>
</dbReference>
<dbReference type="RefSeq" id="NP_061207.1">
    <molecule id="P70303-1"/>
    <property type="nucleotide sequence ID" value="NM_018737.5"/>
</dbReference>
<dbReference type="RefSeq" id="XP_006528975.1">
    <molecule id="P70303-1"/>
    <property type="nucleotide sequence ID" value="XM_006528912.3"/>
</dbReference>
<dbReference type="RefSeq" id="XP_006528976.1">
    <molecule id="P70303-1"/>
    <property type="nucleotide sequence ID" value="XM_006528913.3"/>
</dbReference>
<dbReference type="RefSeq" id="XP_036017926.1">
    <molecule id="P70303-1"/>
    <property type="nucleotide sequence ID" value="XM_036162033.1"/>
</dbReference>
<dbReference type="PDB" id="7MIU">
    <property type="method" value="EM"/>
    <property type="resolution" value="2.60 A"/>
    <property type="chains" value="C/D/G/H=1-586"/>
</dbReference>
<dbReference type="PDB" id="7MIV">
    <property type="method" value="EM"/>
    <property type="resolution" value="2.80 A"/>
    <property type="chains" value="C/D/G/H=1-586"/>
</dbReference>
<dbReference type="PDBsum" id="7MIU"/>
<dbReference type="PDBsum" id="7MIV"/>
<dbReference type="EMDB" id="EMD-23865"/>
<dbReference type="EMDB" id="EMD-23866"/>
<dbReference type="SMR" id="P70303"/>
<dbReference type="BioGRID" id="207735">
    <property type="interactions" value="23"/>
</dbReference>
<dbReference type="FunCoup" id="P70303">
    <property type="interactions" value="1586"/>
</dbReference>
<dbReference type="STRING" id="10090.ENSMUSP00000033727"/>
<dbReference type="BindingDB" id="P70303"/>
<dbReference type="ChEMBL" id="CHEMBL5291502"/>
<dbReference type="GuidetoPHARMACOLOGY" id="3216"/>
<dbReference type="MEROPS" id="C26.A36"/>
<dbReference type="iPTMnet" id="P70303"/>
<dbReference type="PhosphoSitePlus" id="P70303"/>
<dbReference type="SwissPalm" id="P70303"/>
<dbReference type="PaxDb" id="10090-ENSMUSP00000033727"/>
<dbReference type="PeptideAtlas" id="P70303"/>
<dbReference type="ProteomicsDB" id="300214">
    <molecule id="P70303-1"/>
</dbReference>
<dbReference type="ProteomicsDB" id="300215">
    <molecule id="P70303-2"/>
</dbReference>
<dbReference type="ProteomicsDB" id="300216">
    <molecule id="P70303-3"/>
</dbReference>
<dbReference type="Pumba" id="P70303"/>
<dbReference type="Antibodypedia" id="337">
    <property type="antibodies" value="204 antibodies from 27 providers"/>
</dbReference>
<dbReference type="DNASU" id="55936"/>
<dbReference type="Ensembl" id="ENSMUST00000033727.14">
    <molecule id="P70303-1"/>
    <property type="protein sequence ID" value="ENSMUSP00000033727.8"/>
    <property type="gene ID" value="ENSMUSG00000031360.15"/>
</dbReference>
<dbReference type="Ensembl" id="ENSMUST00000101095.9">
    <molecule id="P70303-3"/>
    <property type="protein sequence ID" value="ENSMUSP00000098656.3"/>
    <property type="gene ID" value="ENSMUSG00000031360.15"/>
</dbReference>
<dbReference type="Ensembl" id="ENSMUST00000112301.8">
    <molecule id="P70303-1"/>
    <property type="protein sequence ID" value="ENSMUSP00000107920.2"/>
    <property type="gene ID" value="ENSMUSG00000031360.15"/>
</dbReference>
<dbReference type="Ensembl" id="ENSMUST00000112302.8">
    <molecule id="P70303-2"/>
    <property type="protein sequence ID" value="ENSMUSP00000107921.2"/>
    <property type="gene ID" value="ENSMUSG00000031360.15"/>
</dbReference>
<dbReference type="Ensembl" id="ENSMUST00000112303.8">
    <molecule id="P70303-1"/>
    <property type="protein sequence ID" value="ENSMUSP00000107922.2"/>
    <property type="gene ID" value="ENSMUSG00000031360.15"/>
</dbReference>
<dbReference type="GeneID" id="55936"/>
<dbReference type="KEGG" id="mmu:55936"/>
<dbReference type="UCSC" id="uc009uuo.2">
    <molecule id="P70303-1"/>
    <property type="organism name" value="mouse"/>
</dbReference>
<dbReference type="UCSC" id="uc012hrk.1">
    <molecule id="P70303-2"/>
    <property type="organism name" value="mouse"/>
</dbReference>
<dbReference type="AGR" id="MGI:1933185"/>
<dbReference type="CTD" id="56474"/>
<dbReference type="MGI" id="MGI:1933185">
    <property type="gene designation" value="Ctps2"/>
</dbReference>
<dbReference type="VEuPathDB" id="HostDB:ENSMUSG00000031360"/>
<dbReference type="eggNOG" id="KOG2387">
    <property type="taxonomic scope" value="Eukaryota"/>
</dbReference>
<dbReference type="GeneTree" id="ENSGT00910000144179"/>
<dbReference type="HOGENOM" id="CLU_011675_5_0_1"/>
<dbReference type="InParanoid" id="P70303"/>
<dbReference type="OMA" id="HAAMYCH"/>
<dbReference type="OrthoDB" id="1739076at2759"/>
<dbReference type="PhylomeDB" id="P70303"/>
<dbReference type="TreeFam" id="TF300379"/>
<dbReference type="BRENDA" id="6.3.4.2">
    <property type="organism ID" value="3474"/>
</dbReference>
<dbReference type="Reactome" id="R-MMU-499943">
    <property type="pathway name" value="Interconversion of nucleotide di- and triphosphates"/>
</dbReference>
<dbReference type="UniPathway" id="UPA00159">
    <property type="reaction ID" value="UER00277"/>
</dbReference>
<dbReference type="BioGRID-ORCS" id="55936">
    <property type="hits" value="3 hits in 78 CRISPR screens"/>
</dbReference>
<dbReference type="ChiTaRS" id="Ctps2">
    <property type="organism name" value="mouse"/>
</dbReference>
<dbReference type="PRO" id="PR:P70303"/>
<dbReference type="Proteomes" id="UP000000589">
    <property type="component" value="Chromosome X"/>
</dbReference>
<dbReference type="RNAct" id="P70303">
    <property type="molecule type" value="protein"/>
</dbReference>
<dbReference type="Bgee" id="ENSMUSG00000031360">
    <property type="expression patterns" value="Expressed in granulocyte and 266 other cell types or tissues"/>
</dbReference>
<dbReference type="ExpressionAtlas" id="P70303">
    <property type="expression patterns" value="baseline and differential"/>
</dbReference>
<dbReference type="GO" id="GO:0005739">
    <property type="term" value="C:mitochondrion"/>
    <property type="evidence" value="ECO:0007005"/>
    <property type="project" value="MGI"/>
</dbReference>
<dbReference type="GO" id="GO:0005524">
    <property type="term" value="F:ATP binding"/>
    <property type="evidence" value="ECO:0007669"/>
    <property type="project" value="UniProtKB-KW"/>
</dbReference>
<dbReference type="GO" id="GO:0003883">
    <property type="term" value="F:CTP synthase activity"/>
    <property type="evidence" value="ECO:0007669"/>
    <property type="project" value="UniProtKB-EC"/>
</dbReference>
<dbReference type="GO" id="GO:0042802">
    <property type="term" value="F:identical protein binding"/>
    <property type="evidence" value="ECO:0007669"/>
    <property type="project" value="Ensembl"/>
</dbReference>
<dbReference type="GO" id="GO:0044210">
    <property type="term" value="P:'de novo' CTP biosynthetic process"/>
    <property type="evidence" value="ECO:0007669"/>
    <property type="project" value="UniProtKB-UniPathway"/>
</dbReference>
<dbReference type="CDD" id="cd03113">
    <property type="entry name" value="CTPS_N"/>
    <property type="match status" value="1"/>
</dbReference>
<dbReference type="CDD" id="cd01746">
    <property type="entry name" value="GATase1_CTP_Synthase"/>
    <property type="match status" value="1"/>
</dbReference>
<dbReference type="FunFam" id="3.40.50.300:FF:000207">
    <property type="entry name" value="CTP synthase"/>
    <property type="match status" value="1"/>
</dbReference>
<dbReference type="FunFam" id="3.40.50.880:FF:000005">
    <property type="entry name" value="CTP synthase"/>
    <property type="match status" value="1"/>
</dbReference>
<dbReference type="Gene3D" id="3.40.50.880">
    <property type="match status" value="1"/>
</dbReference>
<dbReference type="Gene3D" id="3.40.50.300">
    <property type="entry name" value="P-loop containing nucleotide triphosphate hydrolases"/>
    <property type="match status" value="1"/>
</dbReference>
<dbReference type="InterPro" id="IPR029062">
    <property type="entry name" value="Class_I_gatase-like"/>
</dbReference>
<dbReference type="InterPro" id="IPR004468">
    <property type="entry name" value="CTP_synthase"/>
</dbReference>
<dbReference type="InterPro" id="IPR017456">
    <property type="entry name" value="CTP_synthase_N"/>
</dbReference>
<dbReference type="InterPro" id="IPR017926">
    <property type="entry name" value="GATASE"/>
</dbReference>
<dbReference type="InterPro" id="IPR033828">
    <property type="entry name" value="GATase1_CTP_Synthase"/>
</dbReference>
<dbReference type="InterPro" id="IPR027417">
    <property type="entry name" value="P-loop_NTPase"/>
</dbReference>
<dbReference type="NCBIfam" id="NF003792">
    <property type="entry name" value="PRK05380.1"/>
    <property type="match status" value="1"/>
</dbReference>
<dbReference type="NCBIfam" id="TIGR00337">
    <property type="entry name" value="PyrG"/>
    <property type="match status" value="1"/>
</dbReference>
<dbReference type="PANTHER" id="PTHR11550">
    <property type="entry name" value="CTP SYNTHASE"/>
    <property type="match status" value="1"/>
</dbReference>
<dbReference type="PANTHER" id="PTHR11550:SF2">
    <property type="entry name" value="CTP SYNTHASE 2"/>
    <property type="match status" value="1"/>
</dbReference>
<dbReference type="Pfam" id="PF06418">
    <property type="entry name" value="CTP_synth_N"/>
    <property type="match status" value="1"/>
</dbReference>
<dbReference type="Pfam" id="PF00117">
    <property type="entry name" value="GATase"/>
    <property type="match status" value="1"/>
</dbReference>
<dbReference type="SUPFAM" id="SSF52317">
    <property type="entry name" value="Class I glutamine amidotransferase-like"/>
    <property type="match status" value="1"/>
</dbReference>
<dbReference type="SUPFAM" id="SSF52540">
    <property type="entry name" value="P-loop containing nucleoside triphosphate hydrolases"/>
    <property type="match status" value="1"/>
</dbReference>
<dbReference type="PROSITE" id="PS51273">
    <property type="entry name" value="GATASE_TYPE_1"/>
    <property type="match status" value="1"/>
</dbReference>
<reference key="1">
    <citation type="submission" date="1996-02" db="EMBL/GenBank/DDBJ databases">
        <title>Identification and characterization of a novel gene (CTPsH) homologous to murine CTP synthetase gene.</title>
        <authorList>
            <person name="Yang B.Z."/>
            <person name="Ding J.H."/>
            <person name="Roe C.R."/>
            <person name="Zhang H."/>
            <person name="Cooney D.A."/>
            <person name="Roller P.P."/>
            <person name="Johns D.G."/>
        </authorList>
    </citation>
    <scope>NUCLEOTIDE SEQUENCE [MRNA] (ISOFORM 1)</scope>
    <source>
        <strain>C57BL/6J X CBA/J</strain>
        <tissue>Liver</tissue>
    </source>
</reference>
<reference key="2">
    <citation type="journal article" date="2005" name="Science">
        <title>The transcriptional landscape of the mammalian genome.</title>
        <authorList>
            <person name="Carninci P."/>
            <person name="Kasukawa T."/>
            <person name="Katayama S."/>
            <person name="Gough J."/>
            <person name="Frith M.C."/>
            <person name="Maeda N."/>
            <person name="Oyama R."/>
            <person name="Ravasi T."/>
            <person name="Lenhard B."/>
            <person name="Wells C."/>
            <person name="Kodzius R."/>
            <person name="Shimokawa K."/>
            <person name="Bajic V.B."/>
            <person name="Brenner S.E."/>
            <person name="Batalov S."/>
            <person name="Forrest A.R."/>
            <person name="Zavolan M."/>
            <person name="Davis M.J."/>
            <person name="Wilming L.G."/>
            <person name="Aidinis V."/>
            <person name="Allen J.E."/>
            <person name="Ambesi-Impiombato A."/>
            <person name="Apweiler R."/>
            <person name="Aturaliya R.N."/>
            <person name="Bailey T.L."/>
            <person name="Bansal M."/>
            <person name="Baxter L."/>
            <person name="Beisel K.W."/>
            <person name="Bersano T."/>
            <person name="Bono H."/>
            <person name="Chalk A.M."/>
            <person name="Chiu K.P."/>
            <person name="Choudhary V."/>
            <person name="Christoffels A."/>
            <person name="Clutterbuck D.R."/>
            <person name="Crowe M.L."/>
            <person name="Dalla E."/>
            <person name="Dalrymple B.P."/>
            <person name="de Bono B."/>
            <person name="Della Gatta G."/>
            <person name="di Bernardo D."/>
            <person name="Down T."/>
            <person name="Engstrom P."/>
            <person name="Fagiolini M."/>
            <person name="Faulkner G."/>
            <person name="Fletcher C.F."/>
            <person name="Fukushima T."/>
            <person name="Furuno M."/>
            <person name="Futaki S."/>
            <person name="Gariboldi M."/>
            <person name="Georgii-Hemming P."/>
            <person name="Gingeras T.R."/>
            <person name="Gojobori T."/>
            <person name="Green R.E."/>
            <person name="Gustincich S."/>
            <person name="Harbers M."/>
            <person name="Hayashi Y."/>
            <person name="Hensch T.K."/>
            <person name="Hirokawa N."/>
            <person name="Hill D."/>
            <person name="Huminiecki L."/>
            <person name="Iacono M."/>
            <person name="Ikeo K."/>
            <person name="Iwama A."/>
            <person name="Ishikawa T."/>
            <person name="Jakt M."/>
            <person name="Kanapin A."/>
            <person name="Katoh M."/>
            <person name="Kawasawa Y."/>
            <person name="Kelso J."/>
            <person name="Kitamura H."/>
            <person name="Kitano H."/>
            <person name="Kollias G."/>
            <person name="Krishnan S.P."/>
            <person name="Kruger A."/>
            <person name="Kummerfeld S.K."/>
            <person name="Kurochkin I.V."/>
            <person name="Lareau L.F."/>
            <person name="Lazarevic D."/>
            <person name="Lipovich L."/>
            <person name="Liu J."/>
            <person name="Liuni S."/>
            <person name="McWilliam S."/>
            <person name="Madan Babu M."/>
            <person name="Madera M."/>
            <person name="Marchionni L."/>
            <person name="Matsuda H."/>
            <person name="Matsuzawa S."/>
            <person name="Miki H."/>
            <person name="Mignone F."/>
            <person name="Miyake S."/>
            <person name="Morris K."/>
            <person name="Mottagui-Tabar S."/>
            <person name="Mulder N."/>
            <person name="Nakano N."/>
            <person name="Nakauchi H."/>
            <person name="Ng P."/>
            <person name="Nilsson R."/>
            <person name="Nishiguchi S."/>
            <person name="Nishikawa S."/>
            <person name="Nori F."/>
            <person name="Ohara O."/>
            <person name="Okazaki Y."/>
            <person name="Orlando V."/>
            <person name="Pang K.C."/>
            <person name="Pavan W.J."/>
            <person name="Pavesi G."/>
            <person name="Pesole G."/>
            <person name="Petrovsky N."/>
            <person name="Piazza S."/>
            <person name="Reed J."/>
            <person name="Reid J.F."/>
            <person name="Ring B.Z."/>
            <person name="Ringwald M."/>
            <person name="Rost B."/>
            <person name="Ruan Y."/>
            <person name="Salzberg S.L."/>
            <person name="Sandelin A."/>
            <person name="Schneider C."/>
            <person name="Schoenbach C."/>
            <person name="Sekiguchi K."/>
            <person name="Semple C.A."/>
            <person name="Seno S."/>
            <person name="Sessa L."/>
            <person name="Sheng Y."/>
            <person name="Shibata Y."/>
            <person name="Shimada H."/>
            <person name="Shimada K."/>
            <person name="Silva D."/>
            <person name="Sinclair B."/>
            <person name="Sperling S."/>
            <person name="Stupka E."/>
            <person name="Sugiura K."/>
            <person name="Sultana R."/>
            <person name="Takenaka Y."/>
            <person name="Taki K."/>
            <person name="Tammoja K."/>
            <person name="Tan S.L."/>
            <person name="Tang S."/>
            <person name="Taylor M.S."/>
            <person name="Tegner J."/>
            <person name="Teichmann S.A."/>
            <person name="Ueda H.R."/>
            <person name="van Nimwegen E."/>
            <person name="Verardo R."/>
            <person name="Wei C.L."/>
            <person name="Yagi K."/>
            <person name="Yamanishi H."/>
            <person name="Zabarovsky E."/>
            <person name="Zhu S."/>
            <person name="Zimmer A."/>
            <person name="Hide W."/>
            <person name="Bult C."/>
            <person name="Grimmond S.M."/>
            <person name="Teasdale R.D."/>
            <person name="Liu E.T."/>
            <person name="Brusic V."/>
            <person name="Quackenbush J."/>
            <person name="Wahlestedt C."/>
            <person name="Mattick J.S."/>
            <person name="Hume D.A."/>
            <person name="Kai C."/>
            <person name="Sasaki D."/>
            <person name="Tomaru Y."/>
            <person name="Fukuda S."/>
            <person name="Kanamori-Katayama M."/>
            <person name="Suzuki M."/>
            <person name="Aoki J."/>
            <person name="Arakawa T."/>
            <person name="Iida J."/>
            <person name="Imamura K."/>
            <person name="Itoh M."/>
            <person name="Kato T."/>
            <person name="Kawaji H."/>
            <person name="Kawagashira N."/>
            <person name="Kawashima T."/>
            <person name="Kojima M."/>
            <person name="Kondo S."/>
            <person name="Konno H."/>
            <person name="Nakano K."/>
            <person name="Ninomiya N."/>
            <person name="Nishio T."/>
            <person name="Okada M."/>
            <person name="Plessy C."/>
            <person name="Shibata K."/>
            <person name="Shiraki T."/>
            <person name="Suzuki S."/>
            <person name="Tagami M."/>
            <person name="Waki K."/>
            <person name="Watahiki A."/>
            <person name="Okamura-Oho Y."/>
            <person name="Suzuki H."/>
            <person name="Kawai J."/>
            <person name="Hayashizaki Y."/>
        </authorList>
    </citation>
    <scope>NUCLEOTIDE SEQUENCE [LARGE SCALE MRNA] (ISOFORMS 1; 2 AND 3)</scope>
    <source>
        <strain>C57BL/6J</strain>
        <tissue>Bone marrow</tissue>
        <tissue>Heart</tissue>
        <tissue>Hippocampus</tissue>
        <tissue>Medulla oblongata</tissue>
    </source>
</reference>
<reference key="3">
    <citation type="journal article" date="2004" name="Genome Res.">
        <title>The status, quality, and expansion of the NIH full-length cDNA project: the Mammalian Gene Collection (MGC).</title>
        <authorList>
            <consortium name="The MGC Project Team"/>
        </authorList>
    </citation>
    <scope>NUCLEOTIDE SEQUENCE [LARGE SCALE MRNA] (ISOFORM 1)</scope>
    <source>
        <strain>FVB/N</strain>
        <tissue>Mammary tumor</tissue>
    </source>
</reference>
<reference key="4">
    <citation type="journal article" date="2010" name="Cell">
        <title>A tissue-specific atlas of mouse protein phosphorylation and expression.</title>
        <authorList>
            <person name="Huttlin E.L."/>
            <person name="Jedrychowski M.P."/>
            <person name="Elias J.E."/>
            <person name="Goswami T."/>
            <person name="Rad R."/>
            <person name="Beausoleil S.A."/>
            <person name="Villen J."/>
            <person name="Haas W."/>
            <person name="Sowa M.E."/>
            <person name="Gygi S.P."/>
        </authorList>
    </citation>
    <scope>PHOSPHORYLATION [LARGE SCALE ANALYSIS] AT SER-568; SER-571 AND SER-574</scope>
    <scope>IDENTIFICATION BY MASS SPECTROMETRY [LARGE SCALE ANALYSIS]</scope>
    <source>
        <tissue>Brain</tissue>
        <tissue>Brown adipose tissue</tissue>
        <tissue>Kidney</tissue>
        <tissue>Liver</tissue>
        <tissue>Lung</tissue>
        <tissue>Pancreas</tissue>
        <tissue>Spleen</tissue>
    </source>
</reference>